<comment type="function">
    <text evidence="1 2">Substrate adapter for ufmylation, the covalent attachment of the ubiquitin-like modifier UFM1 to substrate proteins (By similarity). Required for ufmylation of Atg9; protects the nervous system during aging, possibly by stabilizing Atg9 and supporting its function (By similarity).</text>
</comment>
<comment type="subunit">
    <text evidence="2">Interacts with Atg9; the interaction is transient.</text>
</comment>
<comment type="subcellular location">
    <subcellularLocation>
        <location evidence="1">Endoplasmic reticulum membrane</location>
        <topology evidence="3">Single-pass membrane protein</topology>
    </subcellularLocation>
</comment>
<comment type="similarity">
    <text evidence="5">Belongs to the DDRGK1 family.</text>
</comment>
<dbReference type="EMBL" id="CH902623">
    <property type="protein sequence ID" value="EDV30208.1"/>
    <property type="molecule type" value="Genomic_DNA"/>
</dbReference>
<dbReference type="SMR" id="B3MTS7"/>
<dbReference type="FunCoup" id="B3MTS7">
    <property type="interactions" value="583"/>
</dbReference>
<dbReference type="STRING" id="7217.B3MTS7"/>
<dbReference type="EnsemblMetazoa" id="FBtr0127766">
    <property type="protein sequence ID" value="FBpp0126258"/>
    <property type="gene ID" value="FBgn0100060"/>
</dbReference>
<dbReference type="EnsemblMetazoa" id="XM_001964376.4">
    <property type="protein sequence ID" value="XP_001964412.1"/>
    <property type="gene ID" value="LOC6505712"/>
</dbReference>
<dbReference type="GeneID" id="6505712"/>
<dbReference type="KEGG" id="dan:6505712"/>
<dbReference type="CTD" id="65992"/>
<dbReference type="eggNOG" id="KOG3054">
    <property type="taxonomic scope" value="Eukaryota"/>
</dbReference>
<dbReference type="HOGENOM" id="CLU_059562_1_0_1"/>
<dbReference type="InParanoid" id="B3MTS7"/>
<dbReference type="OMA" id="EFTRECN"/>
<dbReference type="OrthoDB" id="2285710at2759"/>
<dbReference type="PhylomeDB" id="B3MTS7"/>
<dbReference type="Proteomes" id="UP000007801">
    <property type="component" value="Unassembled WGS sequence"/>
</dbReference>
<dbReference type="GO" id="GO:0005789">
    <property type="term" value="C:endoplasmic reticulum membrane"/>
    <property type="evidence" value="ECO:0007669"/>
    <property type="project" value="UniProtKB-SubCell"/>
</dbReference>
<dbReference type="GO" id="GO:0044389">
    <property type="term" value="F:ubiquitin-like protein ligase binding"/>
    <property type="evidence" value="ECO:0007669"/>
    <property type="project" value="TreeGrafter"/>
</dbReference>
<dbReference type="FunFam" id="1.10.10.10:FF:000143">
    <property type="entry name" value="DDRGK domain-containing protein 1"/>
    <property type="match status" value="1"/>
</dbReference>
<dbReference type="Gene3D" id="1.10.10.10">
    <property type="entry name" value="Winged helix-like DNA-binding domain superfamily/Winged helix DNA-binding domain"/>
    <property type="match status" value="1"/>
</dbReference>
<dbReference type="InterPro" id="IPR019153">
    <property type="entry name" value="DDRGK_dom-contain"/>
</dbReference>
<dbReference type="InterPro" id="IPR050899">
    <property type="entry name" value="DDRGK_domain-containing"/>
</dbReference>
<dbReference type="InterPro" id="IPR036388">
    <property type="entry name" value="WH-like_DNA-bd_sf"/>
</dbReference>
<dbReference type="InterPro" id="IPR036390">
    <property type="entry name" value="WH_DNA-bd_sf"/>
</dbReference>
<dbReference type="PANTHER" id="PTHR48176">
    <property type="entry name" value="DDRGK DOMAIN-CONTAINING PROTEIN 1"/>
    <property type="match status" value="1"/>
</dbReference>
<dbReference type="PANTHER" id="PTHR48176:SF1">
    <property type="entry name" value="DDRGK DOMAIN-CONTAINING PROTEIN 1"/>
    <property type="match status" value="1"/>
</dbReference>
<dbReference type="Pfam" id="PF09756">
    <property type="entry name" value="DDRGK"/>
    <property type="match status" value="1"/>
</dbReference>
<dbReference type="SMART" id="SM01128">
    <property type="entry name" value="DDRGK"/>
    <property type="match status" value="1"/>
</dbReference>
<dbReference type="SUPFAM" id="SSF46785">
    <property type="entry name" value="Winged helix' DNA-binding domain"/>
    <property type="match status" value="1"/>
</dbReference>
<organism>
    <name type="scientific">Drosophila ananassae</name>
    <name type="common">Fruit fly</name>
    <dbReference type="NCBI Taxonomy" id="7217"/>
    <lineage>
        <taxon>Eukaryota</taxon>
        <taxon>Metazoa</taxon>
        <taxon>Ecdysozoa</taxon>
        <taxon>Arthropoda</taxon>
        <taxon>Hexapoda</taxon>
        <taxon>Insecta</taxon>
        <taxon>Pterygota</taxon>
        <taxon>Neoptera</taxon>
        <taxon>Endopterygota</taxon>
        <taxon>Diptera</taxon>
        <taxon>Brachycera</taxon>
        <taxon>Muscomorpha</taxon>
        <taxon>Ephydroidea</taxon>
        <taxon>Drosophilidae</taxon>
        <taxon>Drosophila</taxon>
        <taxon>Sophophora</taxon>
    </lineage>
</organism>
<proteinExistence type="inferred from homology"/>
<evidence type="ECO:0000250" key="1">
    <source>
        <dbReference type="UniProtKB" id="Q96HY6"/>
    </source>
</evidence>
<evidence type="ECO:0000250" key="2">
    <source>
        <dbReference type="UniProtKB" id="Q9VDD1"/>
    </source>
</evidence>
<evidence type="ECO:0000255" key="3"/>
<evidence type="ECO:0000256" key="4">
    <source>
        <dbReference type="SAM" id="MobiDB-lite"/>
    </source>
</evidence>
<evidence type="ECO:0000305" key="5"/>
<keyword id="KW-0256">Endoplasmic reticulum</keyword>
<keyword id="KW-0472">Membrane</keyword>
<keyword id="KW-1185">Reference proteome</keyword>
<keyword id="KW-0812">Transmembrane</keyword>
<keyword id="KW-1133">Transmembrane helix</keyword>
<keyword id="KW-0833">Ubl conjugation pathway</keyword>
<accession>B3MTS7</accession>
<feature type="chain" id="PRO_0000391857" description="DDRGK domain-containing protein 1">
    <location>
        <begin position="1"/>
        <end position="304"/>
    </location>
</feature>
<feature type="topological domain" description="Lumenal" evidence="5">
    <location>
        <begin position="1"/>
        <end position="2"/>
    </location>
</feature>
<feature type="transmembrane region" description="Helical" evidence="3">
    <location>
        <begin position="3"/>
        <end position="23"/>
    </location>
</feature>
<feature type="topological domain" description="Cytoplasmic" evidence="5">
    <location>
        <begin position="24"/>
        <end position="304"/>
    </location>
</feature>
<feature type="region of interest" description="Disordered" evidence="4">
    <location>
        <begin position="31"/>
        <end position="174"/>
    </location>
</feature>
<feature type="compositionally biased region" description="Low complexity" evidence="4">
    <location>
        <begin position="53"/>
        <end position="82"/>
    </location>
</feature>
<feature type="compositionally biased region" description="Basic and acidic residues" evidence="4">
    <location>
        <begin position="105"/>
        <end position="174"/>
    </location>
</feature>
<name>DDRGK_DROAN</name>
<protein>
    <recommendedName>
        <fullName>DDRGK domain-containing protein 1</fullName>
    </recommendedName>
</protein>
<gene>
    <name evidence="2" type="primary">Ddrgk1</name>
    <name type="ORF">GF23066</name>
</gene>
<reference key="1">
    <citation type="journal article" date="2007" name="Nature">
        <title>Evolution of genes and genomes on the Drosophila phylogeny.</title>
        <authorList>
            <consortium name="Drosophila 12 genomes consortium"/>
        </authorList>
    </citation>
    <scope>NUCLEOTIDE SEQUENCE [LARGE SCALE GENOMIC DNA]</scope>
    <source>
        <strain>Tucson 14024-0371.13</strain>
    </source>
</reference>
<sequence length="304" mass="33759">MDLIILVGIAIALLVVIISLYLLQKKNSTTEAKPAAAAPQRGVPQRAQEGVPRRAQIARNQRNRLRQNAPVAAAAPQAEAPAGSDNDDDAQADGEGARLPQGAVLDEKMGAKKRAKMEAKEAKRVQREQELYDREQRKAKEAKEDAERKQQEEIEAEAERKKAEAERLAKEERERKEHEEYLKMKAAFSVEEEGFEEGDADEQDNLLADFIQYIKDNKVVVLEDLAVAFKLKTQQAIDRIQELQADGTITGVIDDRGKFIYVSEEELVAVAKFIKQRGRVSIADLAESSNNLINLTPVSAEGSS</sequence>